<organismHost>
    <name type="scientific">Homo sapiens</name>
    <name type="common">Human</name>
    <dbReference type="NCBI Taxonomy" id="9606"/>
</organismHost>
<evidence type="ECO:0000250" key="1">
    <source>
        <dbReference type="UniProtKB" id="P03523"/>
    </source>
</evidence>
<evidence type="ECO:0000250" key="2">
    <source>
        <dbReference type="UniProtKB" id="P28887"/>
    </source>
</evidence>
<evidence type="ECO:0000250" key="3">
    <source>
        <dbReference type="UniProtKB" id="P30929"/>
    </source>
</evidence>
<evidence type="ECO:0000255" key="4">
    <source>
        <dbReference type="PROSITE-ProRule" id="PRU00539"/>
    </source>
</evidence>
<evidence type="ECO:0000255" key="5">
    <source>
        <dbReference type="PROSITE-ProRule" id="PRU00923"/>
    </source>
</evidence>
<evidence type="ECO:0000269" key="6">
    <source>
    </source>
</evidence>
<evidence type="ECO:0000269" key="7">
    <source>
    </source>
</evidence>
<evidence type="ECO:0000269" key="8">
    <source>
    </source>
</evidence>
<evidence type="ECO:0000303" key="9">
    <source>
    </source>
</evidence>
<evidence type="ECO:0000305" key="10"/>
<evidence type="ECO:0000312" key="11">
    <source>
        <dbReference type="EMBL" id="AAK83225.1"/>
    </source>
</evidence>
<evidence type="ECO:0007744" key="12">
    <source>
        <dbReference type="PDB" id="8IZM"/>
    </source>
</evidence>
<evidence type="ECO:0007744" key="13">
    <source>
        <dbReference type="PDB" id="8X01"/>
    </source>
</evidence>
<evidence type="ECO:0007744" key="14">
    <source>
        <dbReference type="PDB" id="8YXL"/>
    </source>
</evidence>
<keyword id="KW-0002">3D-structure</keyword>
<keyword id="KW-0067">ATP-binding</keyword>
<keyword id="KW-0378">Hydrolase</keyword>
<keyword id="KW-0489">Methyltransferase</keyword>
<keyword id="KW-0506">mRNA capping</keyword>
<keyword id="KW-0507">mRNA processing</keyword>
<keyword id="KW-0511">Multifunctional enzyme</keyword>
<keyword id="KW-0547">Nucleotide-binding</keyword>
<keyword id="KW-0548">Nucleotidyltransferase</keyword>
<keyword id="KW-0696">RNA-directed RNA polymerase</keyword>
<keyword id="KW-0949">S-adenosyl-L-methionine</keyword>
<keyword id="KW-0808">Transferase</keyword>
<keyword id="KW-0693">Viral RNA replication</keyword>
<keyword id="KW-0946">Virion</keyword>
<organism>
    <name type="scientific">Mumps virus genotype A (strain Jeryl-Lynn)</name>
    <name type="common">MuV</name>
    <dbReference type="NCBI Taxonomy" id="11168"/>
    <lineage>
        <taxon>Viruses</taxon>
        <taxon>Riboviria</taxon>
        <taxon>Orthornavirae</taxon>
        <taxon>Negarnaviricota</taxon>
        <taxon>Haploviricotina</taxon>
        <taxon>Monjiviricetes</taxon>
        <taxon>Mononegavirales</taxon>
        <taxon>Paramyxoviridae</taxon>
        <taxon>Rubulavirinae</taxon>
        <taxon>Orthorubulavirus</taxon>
        <taxon>Orthorubulavirus parotitidis</taxon>
        <taxon>Mumps orthorubulavirus</taxon>
    </lineage>
</organism>
<feature type="chain" id="PRO_0000462014" description="RNA-directed RNA polymerase L">
    <location>
        <begin position="1"/>
        <end position="2261"/>
    </location>
</feature>
<feature type="domain" description="RdRp catalytic" evidence="4">
    <location>
        <begin position="662"/>
        <end position="846"/>
    </location>
</feature>
<feature type="domain" description="Mononegavirus-type SAM-dependent 2'-O-MTase" evidence="5">
    <location>
        <begin position="1781"/>
        <end position="1994"/>
    </location>
</feature>
<feature type="region of interest" description="PRNTase" evidence="9">
    <location>
        <begin position="919"/>
        <end position="1405"/>
    </location>
</feature>
<feature type="sequence variant" description="In strain: Isolate Jeryl Lynn-CK4." evidence="6">
    <original>D</original>
    <variation>G</variation>
    <location>
        <position position="311"/>
    </location>
</feature>
<sequence>MAGLNEILLPEVHLNSPIVRYKLFYYILHGQLPNDLEPDDLGPLANQNWKAIRAEESQVHARLKQIRVELIARIPSLRWTRSQREIAILIWPRILPILQAYDLRQSMQLPTVWEKLTQSTVNLISDGLERVVLHISNQLTGKPNLFTRSRAGQDTKDYSIPSTRELSQIWFNNEWSGSVKTWLMIKYRMRQLITNQKTGELTDLVTIVDTRSTLCIITPELVALYSSEHKALTYLTFEMVLMVTDMLEGRLNVSSLCTASHYLSPLKKRIEVLLTLVDDLALLMGDKVYGIVSSLESFVYAQLQYGDPVIDIKGTFYGFICNEILDLLTEDNIFTEEEANKVLLDLTSQFDNLSPDLTAELLCIMRLWGHPTLTASQAASKVRESMCAPKVLDFQTIMKTLAFFHAILINGYRRSHNGIWPPTTLHGNAPKSLIEMRHDNSELKYEYVLKNWKSISMLRIHKCFDASPDEDLSIFMKDKAISCPRQDWMGVFRRSLIKQRYRDANRPLPQPFNRRLLLNFLEDDRFDPIKELEYVTSGEYLRDPEFCASYSLKEKEIKATGRIFAKMTKRMRSCQVIAESLLANHAGKLMRENGVVLDQLKLTKSLLTMNQIGIISEHSRRSTADNMTLAHSGSNKHRINNSQFKKNKDNKHEMPDDGFEIAACFLTTDLTKYCLNWRYQVIIPFARTLNSMYGIPHLFEWIHLRLMRSTLYVGDPFNPPSDPTQLDLDTALNDDIFIVSPRGGIEGLCQKLWTMISISTIILSATEANTRVMSMVQGDNQAIAITTRVVRSLSHSEKKEQAYKASKLFFERLRANNHGIGHHLKEQETILSSDFFIYSKRVFYKGRILTQALKNVSKMCLTADILGDCSQASCSNLATTVMRLTENGVEKDLCYFLNAFMTIRQLCYDLVFPQTKSLSQDITNAYLNHPILISRLCLLPSQLGGLNFLSCSRLFNRNIGDPLVSAIADVKRLIKAGCLDIWVLYNILGRRPGKGKWSTLAADPYTLNIDYLVPSTTFLKKHAQYTLMERSVNPMLRGVFSENAAEEEEELAQYLLDREVVMPRVAHVILAQSSCGRRKQIQGYLDSTRTIIRYSLEVRPLSAKKLNTVIEYNLLYLSYNLEIIEKPNIVQPFLNAINVDTCSIDIARSLRKLSWATLLNGRPIEGLETPDPIELVHGCLIIGSDECEHCSSGDDKFTWFFLPKGIRLDDDPASNPPIRVPYIGSKTDERRVASMAYIKGASVSLKSALRLAGVYIWAFGDTEESWQDAYELASTRVNLTLEQLQSLTPLPTSANLVHRLDDGTTQLKFTPASSYAFSSFVHISNDCQILEIDDQVTDSNLIYQQVMITGLALIETWNNPPINFSVYETTLHLHTGSSCCIRPVESCVVNPPLLPVPLINVPQMNKFVYDPEPLSLLEMEKIEDIAYQTRIGGLDQIPLLEKIPLLAHLTAKQMVNSITGLDEATSIMNDAVVQADYTSNWISECCYTYIDSVFVYSGWALLLELSYQMYYLRIQGIQGILDYVYMTLRRIPGMAITGISSTISHPRILRRCINLDVIAPINSPHIASLDYTKLSIDAVMWGTKQVLTNISQGIDYEIVVPSESQLTLSDRVLNLVARKLSLLAIIWANYNYPPKVKGMSPEDKCQALTTHLLQTVEYVEYIQIEKTNIRRMIIEPKLTAYPSNLFYLSRKLLNAIRDSEEGQFLIASYYNSFGYLEPILMESKIFNLSSSESASLTEFDFILNLELSDASLEKYSLPSLLMTAENMDNPFPQPPLHHVLRPLGLSSTSWYKTISVLNYISHMKISDGAHLYLAEGSGASMSLIETFLPGETIWYNSLFNSGENPPQRNFAPLPTQFIESVPYRLIQAGIAAGNGIVQSFYPLWNGNSDITDLSTKTSVEYIIHKVGADTCALVHVDLEGVPGSMNSMLERAQVHALLITVTVLKPGGLLILKASWEPFNRFSFLLTVLWQFFSTIRILRSSYSDPNNHEVYIIATLAVDPTTSSFTTALNRARTLNEQGFSLIPPELVSEYWRKRVEQGQIIQDCIDKVISECVRDQYLADNNIILQAGGTPSTRKWLDLPDYSSFNELQSEMARLITIHLKEVIEILKGQASDHDTLLFTSYNVGPLGKINTILRLIVERILMYTVRNWCILPTQTRLTLRQSIELGEFRLRDVITPMEILKLSPNRKYLKSALNQSTFNHLMGETSDILLNRAYQKRIWKAIGCVIYCFGLLTPDVEGSERIDVDNDIPDYDIHGDII</sequence>
<proteinExistence type="evidence at protein level"/>
<dbReference type="EC" id="2.7.7.48" evidence="2"/>
<dbReference type="EC" id="3.6.1.-" evidence="1"/>
<dbReference type="EC" id="2.7.7.88" evidence="1"/>
<dbReference type="EC" id="2.1.1.375" evidence="1"/>
<dbReference type="EMBL" id="AF201473">
    <property type="protein sequence ID" value="AAF70396.1"/>
    <property type="molecule type" value="Genomic_RNA"/>
</dbReference>
<dbReference type="EMBL" id="AF338106">
    <property type="protein sequence ID" value="AAK83225.1"/>
    <property type="molecule type" value="Genomic_RNA"/>
</dbReference>
<dbReference type="EMBL" id="FJ211586">
    <property type="protein sequence ID" value="ACN50042.1"/>
    <property type="molecule type" value="Viral_cRNA"/>
</dbReference>
<dbReference type="EMBL" id="JQ946550">
    <property type="protein sequence ID" value="AGC97148.1"/>
    <property type="molecule type" value="Viral_cRNA"/>
</dbReference>
<dbReference type="EMBL" id="JQ946551">
    <property type="protein sequence ID" value="AGC97157.1"/>
    <property type="molecule type" value="Viral_cRNA"/>
</dbReference>
<dbReference type="EMBL" id="JQ946552">
    <property type="protein sequence ID" value="AGC97166.1"/>
    <property type="molecule type" value="Viral_cRNA"/>
</dbReference>
<dbReference type="EMBL" id="JQ946553">
    <property type="protein sequence ID" value="AGC97175.1"/>
    <property type="molecule type" value="Viral_cRNA"/>
</dbReference>
<dbReference type="EMBL" id="JQ946554">
    <property type="protein sequence ID" value="AGC97184.1"/>
    <property type="molecule type" value="Viral_cRNA"/>
</dbReference>
<dbReference type="PDB" id="8IZL">
    <property type="method" value="EM"/>
    <property type="resolution" value="2.93 A"/>
    <property type="chains" value="A=1-2261"/>
</dbReference>
<dbReference type="PDB" id="8IZM">
    <property type="method" value="EM"/>
    <property type="resolution" value="3.01 A"/>
    <property type="chains" value="A=1-2261"/>
</dbReference>
<dbReference type="PDB" id="8X01">
    <property type="method" value="EM"/>
    <property type="resolution" value="3.01 A"/>
    <property type="chains" value="A=1-2261"/>
</dbReference>
<dbReference type="PDB" id="8YXL">
    <property type="method" value="EM"/>
    <property type="resolution" value="3.13 A"/>
    <property type="chains" value="A=1-2261"/>
</dbReference>
<dbReference type="PDB" id="8YXM">
    <property type="method" value="EM"/>
    <property type="resolution" value="2.93 A"/>
    <property type="chains" value="A=1-2261"/>
</dbReference>
<dbReference type="PDB" id="8YXP">
    <property type="method" value="EM"/>
    <property type="resolution" value="3.01 A"/>
    <property type="chains" value="A=1-2261"/>
</dbReference>
<dbReference type="PDBsum" id="8IZL"/>
<dbReference type="PDBsum" id="8IZM"/>
<dbReference type="PDBsum" id="8X01"/>
<dbReference type="PDBsum" id="8YXL"/>
<dbReference type="PDBsum" id="8YXM"/>
<dbReference type="PDBsum" id="8YXP"/>
<dbReference type="EMDB" id="EMD-37964"/>
<dbReference type="SMR" id="C0JJA4"/>
<dbReference type="Proteomes" id="UP000130880">
    <property type="component" value="Genome"/>
</dbReference>
<dbReference type="Proteomes" id="UP000140319">
    <property type="component" value="Genome"/>
</dbReference>
<dbReference type="Proteomes" id="UP000163835">
    <property type="component" value="Genome"/>
</dbReference>
<dbReference type="Proteomes" id="UP000181045">
    <property type="component" value="Genome"/>
</dbReference>
<dbReference type="Proteomes" id="UP000181151">
    <property type="component" value="Genome"/>
</dbReference>
<dbReference type="Proteomes" id="UP000181325">
    <property type="component" value="Genome"/>
</dbReference>
<dbReference type="Proteomes" id="UP000181401">
    <property type="component" value="Genome"/>
</dbReference>
<dbReference type="Proteomes" id="UP000181496">
    <property type="component" value="Genome"/>
</dbReference>
<dbReference type="GO" id="GO:0030430">
    <property type="term" value="C:host cell cytoplasm"/>
    <property type="evidence" value="ECO:0007669"/>
    <property type="project" value="UniProtKB-SubCell"/>
</dbReference>
<dbReference type="GO" id="GO:0044423">
    <property type="term" value="C:virion component"/>
    <property type="evidence" value="ECO:0007669"/>
    <property type="project" value="UniProtKB-KW"/>
</dbReference>
<dbReference type="GO" id="GO:0005524">
    <property type="term" value="F:ATP binding"/>
    <property type="evidence" value="ECO:0007669"/>
    <property type="project" value="UniProtKB-KW"/>
</dbReference>
<dbReference type="GO" id="GO:0016787">
    <property type="term" value="F:hydrolase activity"/>
    <property type="evidence" value="ECO:0007669"/>
    <property type="project" value="UniProtKB-KW"/>
</dbReference>
<dbReference type="GO" id="GO:0004482">
    <property type="term" value="F:mRNA 5'-cap (guanine-N7-)-methyltransferase activity"/>
    <property type="evidence" value="ECO:0007669"/>
    <property type="project" value="InterPro"/>
</dbReference>
<dbReference type="GO" id="GO:0003968">
    <property type="term" value="F:RNA-directed RNA polymerase activity"/>
    <property type="evidence" value="ECO:0007669"/>
    <property type="project" value="UniProtKB-KW"/>
</dbReference>
<dbReference type="Gene3D" id="3.40.50.12760">
    <property type="match status" value="1"/>
</dbReference>
<dbReference type="InterPro" id="IPR039736">
    <property type="entry name" value="L_poly_C"/>
</dbReference>
<dbReference type="InterPro" id="IPR026890">
    <property type="entry name" value="Mononeg_mRNAcap"/>
</dbReference>
<dbReference type="InterPro" id="IPR014023">
    <property type="entry name" value="Mononeg_RNA_pol_cat"/>
</dbReference>
<dbReference type="InterPro" id="IPR025786">
    <property type="entry name" value="Mononega_L_MeTrfase"/>
</dbReference>
<dbReference type="InterPro" id="IPR016269">
    <property type="entry name" value="RNA-dir_pol_paramyxovirus"/>
</dbReference>
<dbReference type="NCBIfam" id="TIGR04198">
    <property type="entry name" value="paramyx_RNAcap"/>
    <property type="match status" value="1"/>
</dbReference>
<dbReference type="Pfam" id="PF14318">
    <property type="entry name" value="Mononeg_mRNAcap"/>
    <property type="match status" value="1"/>
</dbReference>
<dbReference type="Pfam" id="PF00946">
    <property type="entry name" value="Mononeg_RNA_pol"/>
    <property type="match status" value="1"/>
</dbReference>
<dbReference type="PIRSF" id="PIRSF000830">
    <property type="entry name" value="RNA_pol_ParamyxoV"/>
    <property type="match status" value="1"/>
</dbReference>
<dbReference type="PROSITE" id="PS50526">
    <property type="entry name" value="RDRP_SSRNA_NEG_NONSEG"/>
    <property type="match status" value="1"/>
</dbReference>
<dbReference type="PROSITE" id="PS51590">
    <property type="entry name" value="SAM_MT_MNV_L"/>
    <property type="match status" value="1"/>
</dbReference>
<comment type="function">
    <text evidence="1">RNA-directed RNA polymerase that catalyzes the transcription of viral mRNAs, their capping and polyadenylation. The template is composed of the viral RNA tightly encapsidated by the nucleoprotein (N). The viral polymerase binds to the genomic RNA at the 3' leader promoter, and transcribes subsequently all viral mRNAs with a decreasing efficiency. The first gene is the most transcribed, and the last the least transcribed. The viral phosphoprotein acts as a processivity factor. Capping is concomitant with initiation of mRNA transcription. Indeed, a GDP polyribonucleotidyl transferase (PRNTase) adds the cap structure when the nascent RNA chain length has reached few nucleotides. Ribose 2'-O methylation of viral mRNA cap precedes and facilitates subsequent guanine-N-7 methylation, both activities being carried by the viral polymerase. Polyadenylation of mRNAs occur by a stuttering mechanism at a slipery stop site present at the end viral genes. After finishing transcription of a mRNA, the polymerase can resume transcription of the downstream gene.</text>
</comment>
<comment type="function">
    <text evidence="1">RNA-directed RNA polymerase that catalyzes the replication of viral genomic RNA. The template is composed of the viral RNA tightly encapsidated by the nucleoprotein (N). The replicase mode is dependent on intracellular N protein concentration. In this mode, the polymerase replicates the whole viral genome without recognizing transcriptional signals, and the replicated genome is not caped or polyadenylated.</text>
</comment>
<comment type="catalytic activity">
    <reaction evidence="4">
        <text>RNA(n) + a ribonucleoside 5'-triphosphate = RNA(n+1) + diphosphate</text>
        <dbReference type="Rhea" id="RHEA:21248"/>
        <dbReference type="Rhea" id="RHEA-COMP:14527"/>
        <dbReference type="Rhea" id="RHEA-COMP:17342"/>
        <dbReference type="ChEBI" id="CHEBI:33019"/>
        <dbReference type="ChEBI" id="CHEBI:61557"/>
        <dbReference type="ChEBI" id="CHEBI:140395"/>
        <dbReference type="EC" id="2.7.7.48"/>
    </reaction>
</comment>
<comment type="catalytic activity">
    <reaction evidence="1">
        <text>a 5'-end (5'-triphosphoguanosine)-adenylyl-adenylyl-cytidylyl-adenosine in mRNA + 2 S-adenosyl-L-methionine = a 5'-end (N(7)-methyl 5'-triphosphoguanosine)-(2'-O-methyladenylyl)-adenylyl-cytidylyl-adenosine in mRNA + 2 S-adenosyl-L-homocysteine + H(+)</text>
        <dbReference type="Rhea" id="RHEA:65376"/>
        <dbReference type="Rhea" id="RHEA-COMP:16797"/>
        <dbReference type="Rhea" id="RHEA-COMP:16798"/>
        <dbReference type="ChEBI" id="CHEBI:15378"/>
        <dbReference type="ChEBI" id="CHEBI:57856"/>
        <dbReference type="ChEBI" id="CHEBI:59789"/>
        <dbReference type="ChEBI" id="CHEBI:156483"/>
        <dbReference type="ChEBI" id="CHEBI:156484"/>
        <dbReference type="EC" id="2.1.1.375"/>
    </reaction>
</comment>
<comment type="catalytic activity">
    <reaction evidence="1">
        <text>a 5'-end (5'-triphosphoguanosine)-adenylyl-adenylyl-cytidylyl-adenosine in mRNA + S-adenosyl-L-methionine = a 5'-end (5'-triphosphoguanosine)-(2'-O-methyladenylyl)-adenylyl-cytidylyl-adenosine in mRNA + S-adenosyl-L-homocysteine + H(+)</text>
        <dbReference type="Rhea" id="RHEA:65380"/>
        <dbReference type="Rhea" id="RHEA-COMP:16797"/>
        <dbReference type="Rhea" id="RHEA-COMP:16801"/>
        <dbReference type="ChEBI" id="CHEBI:15378"/>
        <dbReference type="ChEBI" id="CHEBI:57856"/>
        <dbReference type="ChEBI" id="CHEBI:59789"/>
        <dbReference type="ChEBI" id="CHEBI:156482"/>
        <dbReference type="ChEBI" id="CHEBI:156484"/>
    </reaction>
</comment>
<comment type="catalytic activity">
    <reaction evidence="2">
        <text>a 5'-end triphospho-adenylyl-adenylyl-cytidylyl-adenosine in mRNA + GDP + H(+) = a 5'-end (5'-triphosphoguanosine)-adenylyl-adenylyl-cytidylyl-adenosine in mRNA + diphosphate</text>
        <dbReference type="Rhea" id="RHEA:65436"/>
        <dbReference type="Rhea" id="RHEA-COMP:16797"/>
        <dbReference type="Rhea" id="RHEA-COMP:16799"/>
        <dbReference type="ChEBI" id="CHEBI:15378"/>
        <dbReference type="ChEBI" id="CHEBI:33019"/>
        <dbReference type="ChEBI" id="CHEBI:58189"/>
        <dbReference type="ChEBI" id="CHEBI:156484"/>
        <dbReference type="ChEBI" id="CHEBI:156503"/>
        <dbReference type="EC" id="2.7.7.88"/>
    </reaction>
</comment>
<comment type="catalytic activity">
    <reaction evidence="1">
        <text>a 5'-end (5'-triphosphoguanosine)-(2'-O-methyladenylyl)-adenylyl-cytidylyl-adenosine in mRNA + S-adenosyl-L-methionine = a 5'-end (N(7)-methyl 5'-triphosphoguanosine)-(2'-O-methyladenylyl)-adenylyl-cytidylyl-adenosine in mRNA + S-adenosyl-L-homocysteine</text>
        <dbReference type="Rhea" id="RHEA:65440"/>
        <dbReference type="Rhea" id="RHEA-COMP:16798"/>
        <dbReference type="Rhea" id="RHEA-COMP:16801"/>
        <dbReference type="ChEBI" id="CHEBI:57856"/>
        <dbReference type="ChEBI" id="CHEBI:59789"/>
        <dbReference type="ChEBI" id="CHEBI:156482"/>
        <dbReference type="ChEBI" id="CHEBI:156483"/>
    </reaction>
</comment>
<comment type="catalytic activity">
    <reaction evidence="2">
        <text>GTP + H2O = GDP + phosphate + H(+)</text>
        <dbReference type="Rhea" id="RHEA:19669"/>
        <dbReference type="ChEBI" id="CHEBI:15377"/>
        <dbReference type="ChEBI" id="CHEBI:15378"/>
        <dbReference type="ChEBI" id="CHEBI:37565"/>
        <dbReference type="ChEBI" id="CHEBI:43474"/>
        <dbReference type="ChEBI" id="CHEBI:58189"/>
    </reaction>
</comment>
<comment type="subunit">
    <text evidence="3 8">Interacts with the P protein; this interaction forms the polymerase complex (PubMed:38760379). Interacts with host RUVBL1 and RUVBL2 (R2TP complex); this interaction regulates the viral transcription (By similarity).</text>
</comment>
<comment type="subcellular location">
    <subcellularLocation>
        <location evidence="7">Virion</location>
    </subcellularLocation>
</comment>
<comment type="similarity">
    <text evidence="10">Belongs to the paramyxovirus L protein family.</text>
</comment>
<gene>
    <name type="primary">L</name>
</gene>
<reference key="1">
    <citation type="journal article" date="2000" name="J. Virol.">
        <title>Rescue of mumps virus from cDNA.</title>
        <authorList>
            <person name="Clarke D.K."/>
            <person name="Sidhu M.S."/>
            <person name="Johnson J.E."/>
            <person name="Udem S.A."/>
        </authorList>
    </citation>
    <scope>NUCLEOTIDE SEQUENCE [LARGE SCALE GENOMIC DNA]</scope>
    <source>
        <strain>Jeryl-Lynn</strain>
    </source>
</reference>
<reference key="2">
    <citation type="journal article" date="2002" name="Virology">
        <title>Sequence diversity of Jeryl Lynn strain of mumps virus: quantitative mutant analysis for vaccine quality control.</title>
        <authorList>
            <person name="Amexis G."/>
            <person name="Rubin S."/>
            <person name="Chizhikov V."/>
            <person name="Pelloquin F."/>
            <person name="Carbone K."/>
            <person name="Chumakov K."/>
        </authorList>
    </citation>
    <scope>NUCLEOTIDE SEQUENCE [LARGE SCALE GENOMIC DNA]</scope>
    <source>
        <strain evidence="11">Jeryl-Lynn</strain>
    </source>
</reference>
<reference key="3">
    <citation type="journal article" date="2009" name="Vaccine">
        <title>Comparative analysis of the complete nucleotide sequences of measles, mumps, and rubella strain genomes contained in Priorix-Tetra and ProQuad live attenuated combined vaccines.</title>
        <authorList>
            <person name="Tillieux S.L."/>
            <person name="Halsey W.S."/>
            <person name="Sathe G.M."/>
            <person name="Vassilev V."/>
        </authorList>
    </citation>
    <scope>NUCLEOTIDE SEQUENCE [LARGE SCALE GENOMIC DNA]</scope>
    <source>
        <strain>Jeryl-Lynn</strain>
    </source>
</reference>
<reference key="4">
    <citation type="journal article" date="2015" name="Vaccine">
        <title>In vitro and in vivo growth alter the population dynamic and properties of a Jeryl Lynn mumps vaccine.</title>
        <authorList>
            <person name="Connaughton S.M."/>
            <person name="Wheeler J.X."/>
            <person name="Vitkova E."/>
            <person name="Minor P."/>
            <person name="Schepelmann S."/>
        </authorList>
    </citation>
    <scope>NUCLEOTIDE SEQUENCE [LARGE SCALE GENOMIC DNA]</scope>
    <source>
        <strain>Isolate Jeryl Lyn-CK4</strain>
        <strain>Isolate Jeryl Lynn-CK1</strain>
        <strain>Isolate Jeryl Lynn-CK2</strain>
        <strain>Isolate Jeryl Lynn-CK3</strain>
        <strain>Isolate Jeryl Lynn-CK5</strain>
    </source>
</reference>
<reference key="5">
    <citation type="journal article" date="2016" name="Virol. J.">
        <title>Identification of mumps virus protein and lipid composition by mass spectrometry.</title>
        <authorList>
            <person name="Brgles M."/>
            <person name="Bonta M."/>
            <person name="Santak M."/>
            <person name="Jagusic M."/>
            <person name="Forcic D."/>
            <person name="Halassy B."/>
            <person name="Allmaier G."/>
            <person name="Marchetti-Deschmann M."/>
        </authorList>
    </citation>
    <scope>IDENTIFICATION BY MASS SPECTROMETRY</scope>
    <scope>SUBCELLULAR LOCATION</scope>
    <source>
        <strain>Jeryl-Lynn 5</strain>
    </source>
</reference>
<reference evidence="12 13 14" key="6">
    <citation type="journal article" date="2024" name="Nat. Commun.">
        <title>Structures of the mumps virus polymerase complex via cryo-electron microscopy.</title>
        <authorList>
            <person name="Li T."/>
            <person name="Liu M."/>
            <person name="Gu Z."/>
            <person name="Su X."/>
            <person name="Liu Y."/>
            <person name="Lin J."/>
            <person name="Zhang Y."/>
            <person name="Shen Q.T."/>
        </authorList>
    </citation>
    <scope>STRUCTURE BY ELECTRON MICROSCOPY (2.93 ANGSTROMS)</scope>
    <scope>INTERACTION WITH THE PHOSPHOPROTEIN</scope>
    <source>
        <strain>Jeryl-Lynn</strain>
    </source>
</reference>
<reference evidence="12" key="7">
    <citation type="submission" date="2023-04" db="PDB data bank">
        <title>Structural insights into mumps virus polymerase complex for coordinating replication and transcription.</title>
        <authorList>
            <person name="Li T.L."/>
            <person name="Shen Q.T."/>
        </authorList>
    </citation>
    <scope>STRUCTURE BY ELECTRON MICROSCOPY (3.01 ANGSTROMS)</scope>
</reference>
<name>L_MUMPJ</name>
<protein>
    <recommendedName>
        <fullName>RNA-directed RNA polymerase L</fullName>
        <shortName>Protein L</shortName>
    </recommendedName>
    <alternativeName>
        <fullName>Large structural protein</fullName>
    </alternativeName>
    <alternativeName>
        <fullName>Replicase</fullName>
    </alternativeName>
    <alternativeName>
        <fullName>Transcriptase</fullName>
    </alternativeName>
    <domain>
        <recommendedName>
            <fullName>RNA-directed RNA polymerase</fullName>
            <ecNumber evidence="2">2.7.7.48</ecNumber>
        </recommendedName>
    </domain>
    <domain>
        <recommendedName>
            <fullName evidence="1">GTP phosphohydrolase</fullName>
            <ecNumber evidence="1">3.6.1.-</ecNumber>
        </recommendedName>
    </domain>
    <domain>
        <recommendedName>
            <fullName evidence="10">GDP polyribonucleotidyltransferase</fullName>
            <ecNumber evidence="1">2.7.7.88</ecNumber>
        </recommendedName>
        <alternativeName>
            <fullName evidence="10">PRNTase</fullName>
        </alternativeName>
    </domain>
    <domain>
        <recommendedName>
            <fullName evidence="10">mRNA cap methyltransferase</fullName>
            <ecNumber evidence="1">2.1.1.375</ecNumber>
        </recommendedName>
        <alternativeName>
            <fullName evidence="1">mRNA (guanine-N(7)-)-methyltransferase</fullName>
            <shortName evidence="1">G-N7-MTase</shortName>
        </alternativeName>
        <alternativeName>
            <fullName evidence="1">mRNA (nucleoside-2'-O-)-methyltransferase</fullName>
            <shortName evidence="1">N1-2'-O-MTase</shortName>
        </alternativeName>
    </domain>
</protein>
<accession>C0JJA4</accession>
<accession>A0A0K0K580</accession>
<accession>Q77IS0</accession>
<accession>Q9J4L0</accession>